<accession>Q5SLM2</accession>
<protein>
    <recommendedName>
        <fullName evidence="1">Chaperonin GroEL</fullName>
        <ecNumber evidence="1">5.6.1.7</ecNumber>
    </recommendedName>
    <alternativeName>
        <fullName evidence="1">60 kDa chaperonin</fullName>
    </alternativeName>
    <alternativeName>
        <fullName evidence="1">Chaperonin-60</fullName>
        <shortName evidence="1">Cpn60</shortName>
    </alternativeName>
    <alternativeName>
        <fullName>Heat shock protein 60</fullName>
    </alternativeName>
</protein>
<organism>
    <name type="scientific">Thermus thermophilus (strain ATCC 27634 / DSM 579 / HB8)</name>
    <dbReference type="NCBI Taxonomy" id="300852"/>
    <lineage>
        <taxon>Bacteria</taxon>
        <taxon>Thermotogati</taxon>
        <taxon>Deinococcota</taxon>
        <taxon>Deinococci</taxon>
        <taxon>Thermales</taxon>
        <taxon>Thermaceae</taxon>
        <taxon>Thermus</taxon>
    </lineage>
</organism>
<gene>
    <name evidence="1" type="primary">groEL</name>
    <name type="synonym">cpnL</name>
    <name evidence="1" type="synonym">groL</name>
    <name type="synonym">hsp60</name>
    <name type="synonym">mopA</name>
    <name type="ordered locus">TTHA0271</name>
</gene>
<evidence type="ECO:0000255" key="1">
    <source>
        <dbReference type="HAMAP-Rule" id="MF_00600"/>
    </source>
</evidence>
<evidence type="ECO:0000256" key="2">
    <source>
        <dbReference type="SAM" id="MobiDB-lite"/>
    </source>
</evidence>
<evidence type="ECO:0000269" key="3">
    <source>
    </source>
</evidence>
<evidence type="ECO:0000305" key="4"/>
<comment type="function">
    <text evidence="1">Together with its co-chaperonin GroES, plays an essential role in assisting protein folding. The GroEL-GroES system forms a nano-cage that allows encapsulation of the non-native substrate proteins and provides a physical environment optimized to promote and accelerate protein folding.</text>
</comment>
<comment type="catalytic activity">
    <reaction evidence="1">
        <text>ATP + H2O + a folded polypeptide = ADP + phosphate + an unfolded polypeptide.</text>
        <dbReference type="EC" id="5.6.1.7"/>
    </reaction>
</comment>
<comment type="subunit">
    <text evidence="1">Forms a cylinder of 14 subunits composed of two heptameric rings stacked back-to-back. Interacts with the co-chaperonin GroES.</text>
</comment>
<comment type="interaction">
    <interactant intactId="EBI-15757498">
        <id>Q5SLM2</id>
    </interactant>
    <interactant intactId="EBI-15757522">
        <id>P61493</id>
        <label>groES</label>
    </interactant>
    <organismsDiffer>false</organismsDiffer>
    <experiments>2</experiments>
</comment>
<comment type="subcellular location">
    <subcellularLocation>
        <location evidence="1">Cytoplasm</location>
    </subcellularLocation>
</comment>
<comment type="similarity">
    <text evidence="1">Belongs to the chaperonin (HSP60) family.</text>
</comment>
<reference key="1">
    <citation type="journal article" date="1995" name="J. Biochem.">
        <title>Molecular cloning, expression, and characterization of chaperonin-60 and chaperonin-10 from a thermophilic bacterium, Thermus thermophilus HB8.</title>
        <authorList>
            <person name="Amada K."/>
            <person name="Yohda M."/>
            <person name="Odaka M."/>
            <person name="Endo I."/>
            <person name="Ishii N."/>
            <person name="Taguchi H."/>
            <person name="Yoshida M."/>
        </authorList>
    </citation>
    <scope>NUCLEOTIDE SEQUENCE [GENOMIC DNA]</scope>
    <source>
        <strain>ATCC 27634 / DSM 579 / HB8</strain>
    </source>
</reference>
<reference key="2">
    <citation type="submission" date="1995-06" db="EMBL/GenBank/DDBJ databases">
        <title>Cloning and characterization of the GroESL operon in Thermus aquaticus HB8.</title>
        <authorList>
            <person name="Erbeznik M."/>
            <person name="Joachimiak A."/>
        </authorList>
    </citation>
    <scope>NUCLEOTIDE SEQUENCE [GENOMIC DNA]</scope>
    <source>
        <strain>ATCC 27634 / DSM 579 / HB8</strain>
    </source>
</reference>
<reference key="3">
    <citation type="submission" date="2004-11" db="EMBL/GenBank/DDBJ databases">
        <title>Complete genome sequence of Thermus thermophilus HB8.</title>
        <authorList>
            <person name="Masui R."/>
            <person name="Kurokawa K."/>
            <person name="Nakagawa N."/>
            <person name="Tokunaga F."/>
            <person name="Koyama Y."/>
            <person name="Shibata T."/>
            <person name="Oshima T."/>
            <person name="Yokoyama S."/>
            <person name="Yasunaga T."/>
            <person name="Kuramitsu S."/>
        </authorList>
    </citation>
    <scope>NUCLEOTIDE SEQUENCE [LARGE SCALE GENOMIC DNA]</scope>
    <source>
        <strain>ATCC 27634 / DSM 579 / HB8</strain>
    </source>
</reference>
<reference key="4">
    <citation type="journal article" date="1991" name="J. Biol. Chem.">
        <title>A chaperonin from a thermophilic bacterium, Thermus thermophilus, that controls refoldings of several thermophilic enzymes.</title>
        <authorList>
            <person name="Taguchi H."/>
            <person name="Konishi J."/>
            <person name="Ishii N."/>
            <person name="Yoshida M."/>
        </authorList>
    </citation>
    <scope>PROTEIN SEQUENCE OF 2-44</scope>
</reference>
<sequence length="543" mass="57889">MAKILVFDEAARRALERGVNAVANAVKVTLGPRGRNVVLEKKFGSPTITKDGVTVAKEVELEDHLENIGAQLLKEVASKTNDVAGDGTTTATVLAQAIVREGLKNVAAGANPLALKRGIEKAVEAAVEKIKALAIPVEDRKAIEEVATISANDPEVGKLIADAMEKVGKEGIITVEESKSLETELKFVEGYQFDKGYISPYFVTNPETMEAVLEDAFILIVEKKVSNVRELLPILEQVAQTGKPLLIIAEDVEGEALATLVVNKLRGTLSVAAVKAPGFGDRRKEMLKDIAAVTGGTVISEELGFKLENATLSMLGRAERVRITKDETTIVGGKGKKEDIEARINGIKKELETTDSEYAREKLQERLAKLAGGVAVIRVGAATETELKEKKHRFEDALNATRAAVEEGIVPGGGVTLLRAISAVEELIKKLEGDEATGAKIVRRALEEPARQIAENAGYEGSVIVQQILAETKNPRYGFNAATGEFVDMVEAGIVDPAKVTRSALQNAASIGALILTTEAVVAEKPEKKESTPASAGAGDMDF</sequence>
<dbReference type="EC" id="5.6.1.7" evidence="1"/>
<dbReference type="EMBL" id="D45880">
    <property type="protein sequence ID" value="BAA08299.1"/>
    <property type="molecule type" value="Genomic_DNA"/>
</dbReference>
<dbReference type="EMBL" id="U29483">
    <property type="protein sequence ID" value="AAA83441.1"/>
    <property type="molecule type" value="Genomic_DNA"/>
</dbReference>
<dbReference type="EMBL" id="AP008226">
    <property type="protein sequence ID" value="BAD70094.1"/>
    <property type="molecule type" value="Genomic_DNA"/>
</dbReference>
<dbReference type="PIR" id="A39313">
    <property type="entry name" value="A39313"/>
</dbReference>
<dbReference type="RefSeq" id="WP_011174077.1">
    <property type="nucleotide sequence ID" value="NC_006461.1"/>
</dbReference>
<dbReference type="RefSeq" id="YP_143537.1">
    <property type="nucleotide sequence ID" value="NC_006461.1"/>
</dbReference>
<dbReference type="SMR" id="Q5SLM2"/>
<dbReference type="DIP" id="DIP-48331N"/>
<dbReference type="IntAct" id="Q5SLM2">
    <property type="interactions" value="1"/>
</dbReference>
<dbReference type="EnsemblBacteria" id="BAD70094">
    <property type="protein sequence ID" value="BAD70094"/>
    <property type="gene ID" value="BAD70094"/>
</dbReference>
<dbReference type="GeneID" id="3168209"/>
<dbReference type="KEGG" id="ttj:TTHA0271"/>
<dbReference type="PATRIC" id="fig|300852.9.peg.271"/>
<dbReference type="eggNOG" id="COG0459">
    <property type="taxonomic scope" value="Bacteria"/>
</dbReference>
<dbReference type="HOGENOM" id="CLU_016503_3_0_0"/>
<dbReference type="PhylomeDB" id="Q5SLM2"/>
<dbReference type="Proteomes" id="UP000000532">
    <property type="component" value="Chromosome"/>
</dbReference>
<dbReference type="GO" id="GO:0005737">
    <property type="term" value="C:cytoplasm"/>
    <property type="evidence" value="ECO:0007669"/>
    <property type="project" value="UniProtKB-SubCell"/>
</dbReference>
<dbReference type="GO" id="GO:0005524">
    <property type="term" value="F:ATP binding"/>
    <property type="evidence" value="ECO:0007669"/>
    <property type="project" value="UniProtKB-UniRule"/>
</dbReference>
<dbReference type="GO" id="GO:0140662">
    <property type="term" value="F:ATP-dependent protein folding chaperone"/>
    <property type="evidence" value="ECO:0007669"/>
    <property type="project" value="InterPro"/>
</dbReference>
<dbReference type="GO" id="GO:0016853">
    <property type="term" value="F:isomerase activity"/>
    <property type="evidence" value="ECO:0007669"/>
    <property type="project" value="UniProtKB-KW"/>
</dbReference>
<dbReference type="GO" id="GO:0051082">
    <property type="term" value="F:unfolded protein binding"/>
    <property type="evidence" value="ECO:0007669"/>
    <property type="project" value="UniProtKB-UniRule"/>
</dbReference>
<dbReference type="GO" id="GO:0042026">
    <property type="term" value="P:protein refolding"/>
    <property type="evidence" value="ECO:0007669"/>
    <property type="project" value="UniProtKB-UniRule"/>
</dbReference>
<dbReference type="CDD" id="cd03344">
    <property type="entry name" value="GroEL"/>
    <property type="match status" value="1"/>
</dbReference>
<dbReference type="FunFam" id="3.50.7.10:FF:000001">
    <property type="entry name" value="60 kDa chaperonin"/>
    <property type="match status" value="1"/>
</dbReference>
<dbReference type="Gene3D" id="3.50.7.10">
    <property type="entry name" value="GroEL"/>
    <property type="match status" value="1"/>
</dbReference>
<dbReference type="Gene3D" id="1.10.560.10">
    <property type="entry name" value="GroEL-like equatorial domain"/>
    <property type="match status" value="1"/>
</dbReference>
<dbReference type="Gene3D" id="3.30.260.10">
    <property type="entry name" value="TCP-1-like chaperonin intermediate domain"/>
    <property type="match status" value="1"/>
</dbReference>
<dbReference type="HAMAP" id="MF_00600">
    <property type="entry name" value="CH60"/>
    <property type="match status" value="1"/>
</dbReference>
<dbReference type="InterPro" id="IPR018370">
    <property type="entry name" value="Chaperonin_Cpn60_CS"/>
</dbReference>
<dbReference type="InterPro" id="IPR001844">
    <property type="entry name" value="Cpn60/GroEL"/>
</dbReference>
<dbReference type="InterPro" id="IPR002423">
    <property type="entry name" value="Cpn60/GroEL/TCP-1"/>
</dbReference>
<dbReference type="InterPro" id="IPR027409">
    <property type="entry name" value="GroEL-like_apical_dom_sf"/>
</dbReference>
<dbReference type="InterPro" id="IPR027413">
    <property type="entry name" value="GROEL-like_equatorial_sf"/>
</dbReference>
<dbReference type="InterPro" id="IPR027410">
    <property type="entry name" value="TCP-1-like_intermed_sf"/>
</dbReference>
<dbReference type="NCBIfam" id="TIGR02348">
    <property type="entry name" value="GroEL"/>
    <property type="match status" value="1"/>
</dbReference>
<dbReference type="NCBIfam" id="NF000592">
    <property type="entry name" value="PRK00013.1"/>
    <property type="match status" value="1"/>
</dbReference>
<dbReference type="NCBIfam" id="NF009487">
    <property type="entry name" value="PRK12849.1"/>
    <property type="match status" value="1"/>
</dbReference>
<dbReference type="NCBIfam" id="NF009488">
    <property type="entry name" value="PRK12850.1"/>
    <property type="match status" value="1"/>
</dbReference>
<dbReference type="NCBIfam" id="NF009489">
    <property type="entry name" value="PRK12851.1"/>
    <property type="match status" value="1"/>
</dbReference>
<dbReference type="PANTHER" id="PTHR45633">
    <property type="entry name" value="60 KDA HEAT SHOCK PROTEIN, MITOCHONDRIAL"/>
    <property type="match status" value="1"/>
</dbReference>
<dbReference type="Pfam" id="PF00118">
    <property type="entry name" value="Cpn60_TCP1"/>
    <property type="match status" value="1"/>
</dbReference>
<dbReference type="PRINTS" id="PR00298">
    <property type="entry name" value="CHAPERONIN60"/>
</dbReference>
<dbReference type="SUPFAM" id="SSF52029">
    <property type="entry name" value="GroEL apical domain-like"/>
    <property type="match status" value="1"/>
</dbReference>
<dbReference type="SUPFAM" id="SSF48592">
    <property type="entry name" value="GroEL equatorial domain-like"/>
    <property type="match status" value="1"/>
</dbReference>
<dbReference type="SUPFAM" id="SSF54849">
    <property type="entry name" value="GroEL-intermediate domain like"/>
    <property type="match status" value="1"/>
</dbReference>
<dbReference type="PROSITE" id="PS00296">
    <property type="entry name" value="CHAPERONINS_CPN60"/>
    <property type="match status" value="1"/>
</dbReference>
<proteinExistence type="evidence at protein level"/>
<name>CH60_THET8</name>
<keyword id="KW-0067">ATP-binding</keyword>
<keyword id="KW-0143">Chaperone</keyword>
<keyword id="KW-0963">Cytoplasm</keyword>
<keyword id="KW-0903">Direct protein sequencing</keyword>
<keyword id="KW-0413">Isomerase</keyword>
<keyword id="KW-0547">Nucleotide-binding</keyword>
<keyword id="KW-1185">Reference proteome</keyword>
<feature type="initiator methionine" description="Removed" evidence="3">
    <location>
        <position position="1"/>
    </location>
</feature>
<feature type="chain" id="PRO_0000063582" description="Chaperonin GroEL">
    <location>
        <begin position="2"/>
        <end position="543"/>
    </location>
</feature>
<feature type="region of interest" description="Disordered" evidence="2">
    <location>
        <begin position="524"/>
        <end position="543"/>
    </location>
</feature>
<feature type="binding site" evidence="1">
    <location>
        <begin position="29"/>
        <end position="32"/>
    </location>
    <ligand>
        <name>ATP</name>
        <dbReference type="ChEBI" id="CHEBI:30616"/>
    </ligand>
</feature>
<feature type="binding site" evidence="1">
    <location>
        <position position="50"/>
    </location>
    <ligand>
        <name>ATP</name>
        <dbReference type="ChEBI" id="CHEBI:30616"/>
    </ligand>
</feature>
<feature type="binding site" evidence="1">
    <location>
        <begin position="86"/>
        <end position="90"/>
    </location>
    <ligand>
        <name>ATP</name>
        <dbReference type="ChEBI" id="CHEBI:30616"/>
    </ligand>
</feature>
<feature type="binding site" evidence="1">
    <location>
        <position position="413"/>
    </location>
    <ligand>
        <name>ATP</name>
        <dbReference type="ChEBI" id="CHEBI:30616"/>
    </ligand>
</feature>
<feature type="binding site" evidence="1">
    <location>
        <begin position="480"/>
        <end position="482"/>
    </location>
    <ligand>
        <name>ATP</name>
        <dbReference type="ChEBI" id="CHEBI:30616"/>
    </ligand>
</feature>
<feature type="binding site" evidence="1">
    <location>
        <position position="496"/>
    </location>
    <ligand>
        <name>ATP</name>
        <dbReference type="ChEBI" id="CHEBI:30616"/>
    </ligand>
</feature>
<feature type="sequence conflict" description="In Ref. 4; AA sequence." evidence="4" ref="4">
    <original>R</original>
    <variation>N</variation>
    <location>
        <position position="35"/>
    </location>
</feature>
<feature type="sequence conflict" description="In Ref. 2; AAA83441." evidence="4" ref="2">
    <original>A</original>
    <variation>R</variation>
    <location>
        <position position="239"/>
    </location>
</feature>
<feature type="sequence conflict" description="In Ref. 2; AAA83441." evidence="4" ref="2">
    <original>TGAK</original>
    <variation>RAPE</variation>
    <location>
        <begin position="437"/>
        <end position="440"/>
    </location>
</feature>